<dbReference type="EMBL" id="BX897700">
    <property type="protein sequence ID" value="CAF26288.1"/>
    <property type="molecule type" value="Genomic_DNA"/>
</dbReference>
<dbReference type="RefSeq" id="WP_011179535.1">
    <property type="nucleotide sequence ID" value="NC_005955.1"/>
</dbReference>
<dbReference type="SMR" id="Q6FZE0"/>
<dbReference type="KEGG" id="bqu:BQ08050"/>
<dbReference type="eggNOG" id="COG1841">
    <property type="taxonomic scope" value="Bacteria"/>
</dbReference>
<dbReference type="HOGENOM" id="CLU_131047_1_2_5"/>
<dbReference type="OrthoDB" id="9812790at2"/>
<dbReference type="Proteomes" id="UP000000597">
    <property type="component" value="Chromosome"/>
</dbReference>
<dbReference type="GO" id="GO:0015934">
    <property type="term" value="C:large ribosomal subunit"/>
    <property type="evidence" value="ECO:0007669"/>
    <property type="project" value="InterPro"/>
</dbReference>
<dbReference type="GO" id="GO:0003735">
    <property type="term" value="F:structural constituent of ribosome"/>
    <property type="evidence" value="ECO:0007669"/>
    <property type="project" value="InterPro"/>
</dbReference>
<dbReference type="GO" id="GO:0006412">
    <property type="term" value="P:translation"/>
    <property type="evidence" value="ECO:0007669"/>
    <property type="project" value="UniProtKB-UniRule"/>
</dbReference>
<dbReference type="CDD" id="cd01658">
    <property type="entry name" value="Ribosomal_L30"/>
    <property type="match status" value="1"/>
</dbReference>
<dbReference type="Gene3D" id="3.30.1390.20">
    <property type="entry name" value="Ribosomal protein L30, ferredoxin-like fold domain"/>
    <property type="match status" value="1"/>
</dbReference>
<dbReference type="HAMAP" id="MF_01371_B">
    <property type="entry name" value="Ribosomal_uL30_B"/>
    <property type="match status" value="1"/>
</dbReference>
<dbReference type="InterPro" id="IPR036919">
    <property type="entry name" value="Ribo_uL30_ferredoxin-like_sf"/>
</dbReference>
<dbReference type="InterPro" id="IPR005996">
    <property type="entry name" value="Ribosomal_uL30_bac-type"/>
</dbReference>
<dbReference type="InterPro" id="IPR016082">
    <property type="entry name" value="Ribosomal_uL30_ferredoxin-like"/>
</dbReference>
<dbReference type="NCBIfam" id="TIGR01308">
    <property type="entry name" value="rpmD_bact"/>
    <property type="match status" value="1"/>
</dbReference>
<dbReference type="Pfam" id="PF00327">
    <property type="entry name" value="Ribosomal_L30"/>
    <property type="match status" value="1"/>
</dbReference>
<dbReference type="PIRSF" id="PIRSF002211">
    <property type="entry name" value="Ribosomal_L30_bac-type"/>
    <property type="match status" value="1"/>
</dbReference>
<dbReference type="SUPFAM" id="SSF55129">
    <property type="entry name" value="Ribosomal protein L30p/L7e"/>
    <property type="match status" value="1"/>
</dbReference>
<proteinExistence type="inferred from homology"/>
<feature type="chain" id="PRO_1000056012" description="Large ribosomal subunit protein uL30">
    <location>
        <begin position="1"/>
        <end position="68"/>
    </location>
</feature>
<protein>
    <recommendedName>
        <fullName evidence="1">Large ribosomal subunit protein uL30</fullName>
    </recommendedName>
    <alternativeName>
        <fullName evidence="2">50S ribosomal protein L30</fullName>
    </alternativeName>
</protein>
<accession>Q6FZE0</accession>
<evidence type="ECO:0000255" key="1">
    <source>
        <dbReference type="HAMAP-Rule" id="MF_01371"/>
    </source>
</evidence>
<evidence type="ECO:0000305" key="2"/>
<reference key="1">
    <citation type="journal article" date="2004" name="Proc. Natl. Acad. Sci. U.S.A.">
        <title>The louse-borne human pathogen Bartonella quintana is a genomic derivative of the zoonotic agent Bartonella henselae.</title>
        <authorList>
            <person name="Alsmark U.C.M."/>
            <person name="Frank A.C."/>
            <person name="Karlberg E.O."/>
            <person name="Legault B.-A."/>
            <person name="Ardell D.H."/>
            <person name="Canbaeck B."/>
            <person name="Eriksson A.-S."/>
            <person name="Naeslund A.K."/>
            <person name="Handley S.A."/>
            <person name="Huvet M."/>
            <person name="La Scola B."/>
            <person name="Holmberg M."/>
            <person name="Andersson S.G.E."/>
        </authorList>
    </citation>
    <scope>NUCLEOTIDE SEQUENCE [LARGE SCALE GENOMIC DNA]</scope>
    <source>
        <strain>Toulouse</strain>
    </source>
</reference>
<keyword id="KW-0687">Ribonucleoprotein</keyword>
<keyword id="KW-0689">Ribosomal protein</keyword>
<organism>
    <name type="scientific">Bartonella quintana (strain Toulouse)</name>
    <name type="common">Rochalimaea quintana</name>
    <dbReference type="NCBI Taxonomy" id="283165"/>
    <lineage>
        <taxon>Bacteria</taxon>
        <taxon>Pseudomonadati</taxon>
        <taxon>Pseudomonadota</taxon>
        <taxon>Alphaproteobacteria</taxon>
        <taxon>Hyphomicrobiales</taxon>
        <taxon>Bartonellaceae</taxon>
        <taxon>Bartonella</taxon>
    </lineage>
</organism>
<gene>
    <name evidence="1" type="primary">rpmD</name>
    <name type="ordered locus">BQ08050</name>
</gene>
<sequence>MVQRKSQDGKTVMVEQIGSPIRNSRIQHATLKGLGLNKMRRRRILKDTLCVRGMIAKVRHLVRVIDEG</sequence>
<name>RL30_BARQU</name>
<comment type="subunit">
    <text evidence="1">Part of the 50S ribosomal subunit.</text>
</comment>
<comment type="similarity">
    <text evidence="1">Belongs to the universal ribosomal protein uL30 family.</text>
</comment>